<accession>Q8Z214</accession>
<dbReference type="EMBL" id="AL513382">
    <property type="protein sequence ID" value="CAD08116.1"/>
    <property type="molecule type" value="Genomic_DNA"/>
</dbReference>
<dbReference type="EMBL" id="AE014613">
    <property type="protein sequence ID" value="AAO71478.1"/>
    <property type="molecule type" value="Genomic_DNA"/>
</dbReference>
<dbReference type="RefSeq" id="NP_458406.1">
    <property type="nucleotide sequence ID" value="NC_003198.1"/>
</dbReference>
<dbReference type="RefSeq" id="WP_001775502.1">
    <property type="nucleotide sequence ID" value="NZ_WSUR01000001.1"/>
</dbReference>
<dbReference type="SMR" id="Q8Z214"/>
<dbReference type="STRING" id="220341.gene:17588129"/>
<dbReference type="KEGG" id="stt:t4008"/>
<dbReference type="KEGG" id="sty:STY4298"/>
<dbReference type="PATRIC" id="fig|220341.7.peg.4393"/>
<dbReference type="eggNOG" id="COG1281">
    <property type="taxonomic scope" value="Bacteria"/>
</dbReference>
<dbReference type="HOGENOM" id="CLU_054493_0_0_6"/>
<dbReference type="OMA" id="DMQCECC"/>
<dbReference type="OrthoDB" id="9793753at2"/>
<dbReference type="Proteomes" id="UP000000541">
    <property type="component" value="Chromosome"/>
</dbReference>
<dbReference type="Proteomes" id="UP000002670">
    <property type="component" value="Chromosome"/>
</dbReference>
<dbReference type="GO" id="GO:0005737">
    <property type="term" value="C:cytoplasm"/>
    <property type="evidence" value="ECO:0007669"/>
    <property type="project" value="UniProtKB-SubCell"/>
</dbReference>
<dbReference type="GO" id="GO:0044183">
    <property type="term" value="F:protein folding chaperone"/>
    <property type="evidence" value="ECO:0007669"/>
    <property type="project" value="TreeGrafter"/>
</dbReference>
<dbReference type="GO" id="GO:0051082">
    <property type="term" value="F:unfolded protein binding"/>
    <property type="evidence" value="ECO:0007669"/>
    <property type="project" value="UniProtKB-UniRule"/>
</dbReference>
<dbReference type="GO" id="GO:0042026">
    <property type="term" value="P:protein refolding"/>
    <property type="evidence" value="ECO:0007669"/>
    <property type="project" value="TreeGrafter"/>
</dbReference>
<dbReference type="CDD" id="cd00498">
    <property type="entry name" value="Hsp33"/>
    <property type="match status" value="1"/>
</dbReference>
<dbReference type="FunFam" id="3.55.30.10:FF:000001">
    <property type="entry name" value="33 kDa chaperonin"/>
    <property type="match status" value="1"/>
</dbReference>
<dbReference type="Gene3D" id="1.10.287.480">
    <property type="entry name" value="helix hairpin bin"/>
    <property type="match status" value="1"/>
</dbReference>
<dbReference type="Gene3D" id="3.55.30.10">
    <property type="entry name" value="Hsp33 domain"/>
    <property type="match status" value="1"/>
</dbReference>
<dbReference type="Gene3D" id="3.90.1280.10">
    <property type="entry name" value="HSP33 redox switch-like"/>
    <property type="match status" value="1"/>
</dbReference>
<dbReference type="HAMAP" id="MF_00117">
    <property type="entry name" value="HslO"/>
    <property type="match status" value="1"/>
</dbReference>
<dbReference type="InterPro" id="IPR000397">
    <property type="entry name" value="Heat_shock_Hsp33"/>
</dbReference>
<dbReference type="InterPro" id="IPR016154">
    <property type="entry name" value="Heat_shock_Hsp33_C"/>
</dbReference>
<dbReference type="InterPro" id="IPR016153">
    <property type="entry name" value="Heat_shock_Hsp33_N"/>
</dbReference>
<dbReference type="InterPro" id="IPR023212">
    <property type="entry name" value="Hsp33_helix_hairpin_bin_dom_sf"/>
</dbReference>
<dbReference type="NCBIfam" id="NF001033">
    <property type="entry name" value="PRK00114.1"/>
    <property type="match status" value="1"/>
</dbReference>
<dbReference type="PANTHER" id="PTHR30111">
    <property type="entry name" value="33 KDA CHAPERONIN"/>
    <property type="match status" value="1"/>
</dbReference>
<dbReference type="PANTHER" id="PTHR30111:SF1">
    <property type="entry name" value="33 KDA CHAPERONIN"/>
    <property type="match status" value="1"/>
</dbReference>
<dbReference type="Pfam" id="PF01430">
    <property type="entry name" value="HSP33"/>
    <property type="match status" value="1"/>
</dbReference>
<dbReference type="PIRSF" id="PIRSF005261">
    <property type="entry name" value="Heat_shock_Hsp33"/>
    <property type="match status" value="1"/>
</dbReference>
<dbReference type="SUPFAM" id="SSF64397">
    <property type="entry name" value="Hsp33 domain"/>
    <property type="match status" value="1"/>
</dbReference>
<dbReference type="SUPFAM" id="SSF118352">
    <property type="entry name" value="HSP33 redox switch-like"/>
    <property type="match status" value="1"/>
</dbReference>
<feature type="chain" id="PRO_0000192196" description="33 kDa chaperonin">
    <location>
        <begin position="1"/>
        <end position="292"/>
    </location>
</feature>
<feature type="disulfide bond" description="Redox-active" evidence="1">
    <location>
        <begin position="230"/>
        <end position="232"/>
    </location>
</feature>
<feature type="disulfide bond" description="Redox-active" evidence="1">
    <location>
        <begin position="263"/>
        <end position="266"/>
    </location>
</feature>
<comment type="function">
    <text evidence="1">Redox regulated molecular chaperone. Protects both thermally unfolding and oxidatively damaged proteins from irreversible aggregation. Plays an important role in the bacterial defense system toward oxidative stress.</text>
</comment>
<comment type="subcellular location">
    <subcellularLocation>
        <location evidence="1">Cytoplasm</location>
    </subcellularLocation>
</comment>
<comment type="PTM">
    <text evidence="1">Under oxidizing conditions two disulfide bonds are formed involving the reactive cysteines. Under reducing conditions zinc is bound to the reactive cysteines and the protein is inactive.</text>
</comment>
<comment type="similarity">
    <text evidence="1">Belongs to the HSP33 family.</text>
</comment>
<keyword id="KW-0143">Chaperone</keyword>
<keyword id="KW-0963">Cytoplasm</keyword>
<keyword id="KW-1015">Disulfide bond</keyword>
<keyword id="KW-0676">Redox-active center</keyword>
<keyword id="KW-0862">Zinc</keyword>
<reference key="1">
    <citation type="journal article" date="2001" name="Nature">
        <title>Complete genome sequence of a multiple drug resistant Salmonella enterica serovar Typhi CT18.</title>
        <authorList>
            <person name="Parkhill J."/>
            <person name="Dougan G."/>
            <person name="James K.D."/>
            <person name="Thomson N.R."/>
            <person name="Pickard D."/>
            <person name="Wain J."/>
            <person name="Churcher C.M."/>
            <person name="Mungall K.L."/>
            <person name="Bentley S.D."/>
            <person name="Holden M.T.G."/>
            <person name="Sebaihia M."/>
            <person name="Baker S."/>
            <person name="Basham D."/>
            <person name="Brooks K."/>
            <person name="Chillingworth T."/>
            <person name="Connerton P."/>
            <person name="Cronin A."/>
            <person name="Davis P."/>
            <person name="Davies R.M."/>
            <person name="Dowd L."/>
            <person name="White N."/>
            <person name="Farrar J."/>
            <person name="Feltwell T."/>
            <person name="Hamlin N."/>
            <person name="Haque A."/>
            <person name="Hien T.T."/>
            <person name="Holroyd S."/>
            <person name="Jagels K."/>
            <person name="Krogh A."/>
            <person name="Larsen T.S."/>
            <person name="Leather S."/>
            <person name="Moule S."/>
            <person name="O'Gaora P."/>
            <person name="Parry C."/>
            <person name="Quail M.A."/>
            <person name="Rutherford K.M."/>
            <person name="Simmonds M."/>
            <person name="Skelton J."/>
            <person name="Stevens K."/>
            <person name="Whitehead S."/>
            <person name="Barrell B.G."/>
        </authorList>
    </citation>
    <scope>NUCLEOTIDE SEQUENCE [LARGE SCALE GENOMIC DNA]</scope>
    <source>
        <strain>CT18</strain>
    </source>
</reference>
<reference key="2">
    <citation type="journal article" date="2003" name="J. Bacteriol.">
        <title>Comparative genomics of Salmonella enterica serovar Typhi strains Ty2 and CT18.</title>
        <authorList>
            <person name="Deng W."/>
            <person name="Liou S.-R."/>
            <person name="Plunkett G. III"/>
            <person name="Mayhew G.F."/>
            <person name="Rose D.J."/>
            <person name="Burland V."/>
            <person name="Kodoyianni V."/>
            <person name="Schwartz D.C."/>
            <person name="Blattner F.R."/>
        </authorList>
    </citation>
    <scope>NUCLEOTIDE SEQUENCE [LARGE SCALE GENOMIC DNA]</scope>
    <source>
        <strain>ATCC 700931 / Ty2</strain>
    </source>
</reference>
<gene>
    <name evidence="1" type="primary">hslO</name>
    <name type="ordered locus">STY4298</name>
    <name type="ordered locus">t4008</name>
</gene>
<organism>
    <name type="scientific">Salmonella typhi</name>
    <dbReference type="NCBI Taxonomy" id="90370"/>
    <lineage>
        <taxon>Bacteria</taxon>
        <taxon>Pseudomonadati</taxon>
        <taxon>Pseudomonadota</taxon>
        <taxon>Gammaproteobacteria</taxon>
        <taxon>Enterobacterales</taxon>
        <taxon>Enterobacteriaceae</taxon>
        <taxon>Salmonella</taxon>
    </lineage>
</organism>
<name>HSLO_SALTI</name>
<proteinExistence type="inferred from homology"/>
<sequence>MPQHDQLHRYLFENFAVRGELVTVSETLQQILDNHNYPQSVKTVLAELLVATSLLTATLKFAGDITVQLQGDGPLSLAVINGNNQQQMRGVARVQGDIPDNADLKTLVGNGYLVITITPEEGERYQGVVGLEGDTLAACLEDYFLRSEQLPTRLFIRTGDVDGKPAAGGMLLQVMPAQNAQAEDFDHLAMLTETIKSEELLTLPANDVLWRLYHEEEVTLYDPQEVEFKCTCSRERCAGALKTLPDEEVDSILAEEGEIDMHCDYCGNHYLFNAMDIAEIRNNASPADPQVH</sequence>
<evidence type="ECO:0000255" key="1">
    <source>
        <dbReference type="HAMAP-Rule" id="MF_00117"/>
    </source>
</evidence>
<protein>
    <recommendedName>
        <fullName evidence="1">33 kDa chaperonin</fullName>
    </recommendedName>
    <alternativeName>
        <fullName evidence="1">Heat shock protein 33 homolog</fullName>
        <shortName evidence="1">HSP33</shortName>
    </alternativeName>
</protein>